<proteinExistence type="inferred from homology"/>
<organism>
    <name type="scientific">Aliivibrio fischeri (strain MJ11)</name>
    <name type="common">Vibrio fischeri</name>
    <dbReference type="NCBI Taxonomy" id="388396"/>
    <lineage>
        <taxon>Bacteria</taxon>
        <taxon>Pseudomonadati</taxon>
        <taxon>Pseudomonadota</taxon>
        <taxon>Gammaproteobacteria</taxon>
        <taxon>Vibrionales</taxon>
        <taxon>Vibrionaceae</taxon>
        <taxon>Aliivibrio</taxon>
    </lineage>
</organism>
<evidence type="ECO:0000255" key="1">
    <source>
        <dbReference type="HAMAP-Rule" id="MF_01042"/>
    </source>
</evidence>
<feature type="chain" id="PRO_1000136057" description="Ribosome rescue factor SmrB">
    <location>
        <begin position="1"/>
        <end position="177"/>
    </location>
</feature>
<feature type="domain" description="Smr" evidence="1">
    <location>
        <begin position="98"/>
        <end position="173"/>
    </location>
</feature>
<gene>
    <name evidence="1" type="primary">smrB</name>
    <name type="ordered locus">VFMJ11_1940</name>
</gene>
<name>SMRB_ALIFM</name>
<protein>
    <recommendedName>
        <fullName evidence="1">Ribosome rescue factor SmrB</fullName>
        <ecNumber evidence="1">3.1.-.-</ecNumber>
    </recommendedName>
</protein>
<accession>B5FGB1</accession>
<comment type="function">
    <text evidence="1">Acts as a ribosome collision sensor. Detects stalled/collided disomes (pairs of ribosomes where the leading ribosome is stalled and a second ribosome has collided with it) and endonucleolytically cleaves mRNA at the 5' boundary of the stalled ribosome. Stalled/collided disomes form a new interface (primarily via the 30S subunits) that binds SmrB. Cleaved mRNA becomes available for tmRNA ligation, leading to ribosomal subunit dissociation and rescue of stalled ribosomes.</text>
</comment>
<comment type="subunit">
    <text evidence="1">Associates with collided ribosomes, but not with correctly translating polysomes.</text>
</comment>
<comment type="similarity">
    <text evidence="1">Belongs to the SmrB family.</text>
</comment>
<keyword id="KW-0255">Endonuclease</keyword>
<keyword id="KW-0378">Hydrolase</keyword>
<keyword id="KW-0540">Nuclease</keyword>
<keyword id="KW-0694">RNA-binding</keyword>
<keyword id="KW-0699">rRNA-binding</keyword>
<sequence length="177" mass="20184">MSKNDHLSDDELSLFREAVQGSKKLQQDTIIHQPSKNFSDLQQQRKSLKEGKNEEFFFSDEFVPLLSEDGPIRYARDDVSKYEVKRLRRGVYVPDVFLDMHGMKQDEAKRELGSMIAYCLKENISCASVMHGIGKHILKQKVPLWLAQHPDVMAFHQAPLEFGGAGAILVLLSIPDR</sequence>
<dbReference type="EC" id="3.1.-.-" evidence="1"/>
<dbReference type="EMBL" id="CP001139">
    <property type="protein sequence ID" value="ACH66264.1"/>
    <property type="molecule type" value="Genomic_DNA"/>
</dbReference>
<dbReference type="RefSeq" id="WP_005420263.1">
    <property type="nucleotide sequence ID" value="NC_011184.1"/>
</dbReference>
<dbReference type="SMR" id="B5FGB1"/>
<dbReference type="GeneID" id="54164508"/>
<dbReference type="KEGG" id="vfm:VFMJ11_1940"/>
<dbReference type="HOGENOM" id="CLU_055978_4_0_6"/>
<dbReference type="Proteomes" id="UP000001857">
    <property type="component" value="Chromosome I"/>
</dbReference>
<dbReference type="GO" id="GO:0004521">
    <property type="term" value="F:RNA endonuclease activity"/>
    <property type="evidence" value="ECO:0007669"/>
    <property type="project" value="UniProtKB-UniRule"/>
</dbReference>
<dbReference type="GO" id="GO:0019843">
    <property type="term" value="F:rRNA binding"/>
    <property type="evidence" value="ECO:0007669"/>
    <property type="project" value="UniProtKB-UniRule"/>
</dbReference>
<dbReference type="GO" id="GO:0072344">
    <property type="term" value="P:rescue of stalled ribosome"/>
    <property type="evidence" value="ECO:0007669"/>
    <property type="project" value="UniProtKB-UniRule"/>
</dbReference>
<dbReference type="Gene3D" id="3.30.1370.110">
    <property type="match status" value="1"/>
</dbReference>
<dbReference type="HAMAP" id="MF_01042">
    <property type="entry name" value="SmrB"/>
    <property type="match status" value="1"/>
</dbReference>
<dbReference type="InterPro" id="IPR002625">
    <property type="entry name" value="Smr_dom"/>
</dbReference>
<dbReference type="InterPro" id="IPR036063">
    <property type="entry name" value="Smr_dom_sf"/>
</dbReference>
<dbReference type="InterPro" id="IPR022990">
    <property type="entry name" value="SmrB-like"/>
</dbReference>
<dbReference type="NCBIfam" id="NF003432">
    <property type="entry name" value="PRK04946.1"/>
    <property type="match status" value="1"/>
</dbReference>
<dbReference type="PANTHER" id="PTHR35562">
    <property type="entry name" value="DNA ENDONUCLEASE SMRA-RELATED"/>
    <property type="match status" value="1"/>
</dbReference>
<dbReference type="PANTHER" id="PTHR35562:SF1">
    <property type="entry name" value="UPF0115 PROTEIN YFCN"/>
    <property type="match status" value="1"/>
</dbReference>
<dbReference type="Pfam" id="PF01713">
    <property type="entry name" value="Smr"/>
    <property type="match status" value="1"/>
</dbReference>
<dbReference type="SMART" id="SM00463">
    <property type="entry name" value="SMR"/>
    <property type="match status" value="1"/>
</dbReference>
<dbReference type="SUPFAM" id="SSF160443">
    <property type="entry name" value="SMR domain-like"/>
    <property type="match status" value="1"/>
</dbReference>
<dbReference type="PROSITE" id="PS50828">
    <property type="entry name" value="SMR"/>
    <property type="match status" value="1"/>
</dbReference>
<reference key="1">
    <citation type="submission" date="2008-08" db="EMBL/GenBank/DDBJ databases">
        <title>Complete sequence of Vibrio fischeri strain MJ11.</title>
        <authorList>
            <person name="Mandel M.J."/>
            <person name="Stabb E.V."/>
            <person name="Ruby E.G."/>
            <person name="Ferriera S."/>
            <person name="Johnson J."/>
            <person name="Kravitz S."/>
            <person name="Beeson K."/>
            <person name="Sutton G."/>
            <person name="Rogers Y.-H."/>
            <person name="Friedman R."/>
            <person name="Frazier M."/>
            <person name="Venter J.C."/>
        </authorList>
    </citation>
    <scope>NUCLEOTIDE SEQUENCE [LARGE SCALE GENOMIC DNA]</scope>
    <source>
        <strain>MJ11</strain>
    </source>
</reference>